<keyword id="KW-0028">Amino-acid biosynthesis</keyword>
<keyword id="KW-0963">Cytoplasm</keyword>
<keyword id="KW-0554">One-carbon metabolism</keyword>
<keyword id="KW-0663">Pyridoxal phosphate</keyword>
<keyword id="KW-0808">Transferase</keyword>
<comment type="function">
    <text evidence="1">Catalyzes the reversible interconversion of serine and glycine with tetrahydrofolate (THF) serving as the one-carbon carrier. This reaction serves as the major source of one-carbon groups required for the biosynthesis of purines, thymidylate, methionine, and other important biomolecules. Also exhibits THF-independent aldolase activity toward beta-hydroxyamino acids, producing glycine and aldehydes, via a retro-aldol mechanism.</text>
</comment>
<comment type="catalytic activity">
    <reaction evidence="1">
        <text>(6R)-5,10-methylene-5,6,7,8-tetrahydrofolate + glycine + H2O = (6S)-5,6,7,8-tetrahydrofolate + L-serine</text>
        <dbReference type="Rhea" id="RHEA:15481"/>
        <dbReference type="ChEBI" id="CHEBI:15377"/>
        <dbReference type="ChEBI" id="CHEBI:15636"/>
        <dbReference type="ChEBI" id="CHEBI:33384"/>
        <dbReference type="ChEBI" id="CHEBI:57305"/>
        <dbReference type="ChEBI" id="CHEBI:57453"/>
        <dbReference type="EC" id="2.1.2.1"/>
    </reaction>
</comment>
<comment type="cofactor">
    <cofactor evidence="1">
        <name>pyridoxal 5'-phosphate</name>
        <dbReference type="ChEBI" id="CHEBI:597326"/>
    </cofactor>
</comment>
<comment type="pathway">
    <text evidence="1">One-carbon metabolism; tetrahydrofolate interconversion.</text>
</comment>
<comment type="pathway">
    <text evidence="1">Amino-acid biosynthesis; glycine biosynthesis; glycine from L-serine: step 1/1.</text>
</comment>
<comment type="subunit">
    <text evidence="1">Homodimer.</text>
</comment>
<comment type="subcellular location">
    <subcellularLocation>
        <location evidence="1">Cytoplasm</location>
    </subcellularLocation>
</comment>
<comment type="similarity">
    <text evidence="1">Belongs to the SHMT family.</text>
</comment>
<evidence type="ECO:0000255" key="1">
    <source>
        <dbReference type="HAMAP-Rule" id="MF_00051"/>
    </source>
</evidence>
<gene>
    <name evidence="1" type="primary">glyA</name>
    <name type="ordered locus">jhp_0171</name>
</gene>
<feature type="chain" id="PRO_0000113587" description="Serine hydroxymethyltransferase">
    <location>
        <begin position="1"/>
        <end position="416"/>
    </location>
</feature>
<feature type="binding site" evidence="1">
    <location>
        <position position="118"/>
    </location>
    <ligand>
        <name>(6S)-5,6,7,8-tetrahydrofolate</name>
        <dbReference type="ChEBI" id="CHEBI:57453"/>
    </ligand>
</feature>
<feature type="binding site" evidence="1">
    <location>
        <begin position="122"/>
        <end position="124"/>
    </location>
    <ligand>
        <name>(6S)-5,6,7,8-tetrahydrofolate</name>
        <dbReference type="ChEBI" id="CHEBI:57453"/>
    </ligand>
</feature>
<feature type="binding site" evidence="1">
    <location>
        <position position="242"/>
    </location>
    <ligand>
        <name>(6S)-5,6,7,8-tetrahydrofolate</name>
        <dbReference type="ChEBI" id="CHEBI:57453"/>
    </ligand>
</feature>
<feature type="site" description="Plays an important role in substrate specificity" evidence="1">
    <location>
        <position position="225"/>
    </location>
</feature>
<feature type="modified residue" description="N6-(pyridoxal phosphate)lysine" evidence="1">
    <location>
        <position position="226"/>
    </location>
</feature>
<protein>
    <recommendedName>
        <fullName evidence="1">Serine hydroxymethyltransferase</fullName>
        <shortName evidence="1">SHMT</shortName>
        <shortName evidence="1">Serine methylase</shortName>
        <ecNumber evidence="1">2.1.2.1</ecNumber>
    </recommendedName>
</protein>
<dbReference type="EC" id="2.1.2.1" evidence="1"/>
<dbReference type="EMBL" id="AE001439">
    <property type="protein sequence ID" value="AAD05752.1"/>
    <property type="molecule type" value="Genomic_DNA"/>
</dbReference>
<dbReference type="PIR" id="G71965">
    <property type="entry name" value="G71965"/>
</dbReference>
<dbReference type="RefSeq" id="WP_000323050.1">
    <property type="nucleotide sequence ID" value="NC_000921.1"/>
</dbReference>
<dbReference type="SMR" id="Q9ZMP7"/>
<dbReference type="IntAct" id="Q9ZMP7">
    <property type="interactions" value="1"/>
</dbReference>
<dbReference type="KEGG" id="hpj:jhp_0171"/>
<dbReference type="eggNOG" id="COG0112">
    <property type="taxonomic scope" value="Bacteria"/>
</dbReference>
<dbReference type="UniPathway" id="UPA00193"/>
<dbReference type="UniPathway" id="UPA00288">
    <property type="reaction ID" value="UER01023"/>
</dbReference>
<dbReference type="Proteomes" id="UP000000804">
    <property type="component" value="Chromosome"/>
</dbReference>
<dbReference type="GO" id="GO:0005829">
    <property type="term" value="C:cytosol"/>
    <property type="evidence" value="ECO:0007669"/>
    <property type="project" value="TreeGrafter"/>
</dbReference>
<dbReference type="GO" id="GO:0004372">
    <property type="term" value="F:glycine hydroxymethyltransferase activity"/>
    <property type="evidence" value="ECO:0007669"/>
    <property type="project" value="UniProtKB-UniRule"/>
</dbReference>
<dbReference type="GO" id="GO:0030170">
    <property type="term" value="F:pyridoxal phosphate binding"/>
    <property type="evidence" value="ECO:0007669"/>
    <property type="project" value="UniProtKB-UniRule"/>
</dbReference>
<dbReference type="GO" id="GO:0019264">
    <property type="term" value="P:glycine biosynthetic process from serine"/>
    <property type="evidence" value="ECO:0007669"/>
    <property type="project" value="UniProtKB-UniRule"/>
</dbReference>
<dbReference type="GO" id="GO:0035999">
    <property type="term" value="P:tetrahydrofolate interconversion"/>
    <property type="evidence" value="ECO:0007669"/>
    <property type="project" value="UniProtKB-UniRule"/>
</dbReference>
<dbReference type="CDD" id="cd00378">
    <property type="entry name" value="SHMT"/>
    <property type="match status" value="1"/>
</dbReference>
<dbReference type="FunFam" id="3.40.640.10:FF:000001">
    <property type="entry name" value="Serine hydroxymethyltransferase"/>
    <property type="match status" value="1"/>
</dbReference>
<dbReference type="Gene3D" id="3.90.1150.10">
    <property type="entry name" value="Aspartate Aminotransferase, domain 1"/>
    <property type="match status" value="1"/>
</dbReference>
<dbReference type="Gene3D" id="3.40.640.10">
    <property type="entry name" value="Type I PLP-dependent aspartate aminotransferase-like (Major domain)"/>
    <property type="match status" value="1"/>
</dbReference>
<dbReference type="HAMAP" id="MF_00051">
    <property type="entry name" value="SHMT"/>
    <property type="match status" value="1"/>
</dbReference>
<dbReference type="InterPro" id="IPR015424">
    <property type="entry name" value="PyrdxlP-dep_Trfase"/>
</dbReference>
<dbReference type="InterPro" id="IPR015421">
    <property type="entry name" value="PyrdxlP-dep_Trfase_major"/>
</dbReference>
<dbReference type="InterPro" id="IPR015422">
    <property type="entry name" value="PyrdxlP-dep_Trfase_small"/>
</dbReference>
<dbReference type="InterPro" id="IPR001085">
    <property type="entry name" value="Ser_HO-MeTrfase"/>
</dbReference>
<dbReference type="InterPro" id="IPR049943">
    <property type="entry name" value="Ser_HO-MeTrfase-like"/>
</dbReference>
<dbReference type="InterPro" id="IPR019798">
    <property type="entry name" value="Ser_HO-MeTrfase_PLP_BS"/>
</dbReference>
<dbReference type="InterPro" id="IPR039429">
    <property type="entry name" value="SHMT-like_dom"/>
</dbReference>
<dbReference type="NCBIfam" id="NF000586">
    <property type="entry name" value="PRK00011.1"/>
    <property type="match status" value="1"/>
</dbReference>
<dbReference type="PANTHER" id="PTHR11680">
    <property type="entry name" value="SERINE HYDROXYMETHYLTRANSFERASE"/>
    <property type="match status" value="1"/>
</dbReference>
<dbReference type="PANTHER" id="PTHR11680:SF50">
    <property type="entry name" value="SERINE HYDROXYMETHYLTRANSFERASE"/>
    <property type="match status" value="1"/>
</dbReference>
<dbReference type="Pfam" id="PF00464">
    <property type="entry name" value="SHMT"/>
    <property type="match status" value="1"/>
</dbReference>
<dbReference type="PIRSF" id="PIRSF000412">
    <property type="entry name" value="SHMT"/>
    <property type="match status" value="1"/>
</dbReference>
<dbReference type="SUPFAM" id="SSF53383">
    <property type="entry name" value="PLP-dependent transferases"/>
    <property type="match status" value="1"/>
</dbReference>
<dbReference type="PROSITE" id="PS00096">
    <property type="entry name" value="SHMT"/>
    <property type="match status" value="1"/>
</dbReference>
<sequence>MAYFLEQTDSEIFEFIVEEFKRQNEHLEMIASENYTFPSVMEAMGSILTNKYAEGYPNKRYYGGCEVVDKIESLAIERAKKLFNCQFANVQAHSGSQANNAVYHALLKLYDKILGMDLSCGGHLTHGAKVSLTGKHYQSFSYGVGLDGYIDYEEALKIAQSVKPQIIVCGFSAYPREIDFKKFREIADAVGALLLGDIAHVAGLVVANEHAHPFPHCHVVSSTTHKTLRGPRGGLILTNDEEIAAKIDKAIFPGTQGGPLMHVIAAKAVGFKENLKPEFKAYAKLVKSNMQVLAKTLKEKNHKLVSGGTSNHLLLMDFLDKPYSGKDADIALGNAGITVNKNTIPGETRNPFVTSGIRIGSAALSARGMGAKEFEIIGNKISDILNDINNVSLQLHVKEELKTMANQFPVYHQPIF</sequence>
<accession>Q9ZMP7</accession>
<name>GLYA_HELPJ</name>
<reference key="1">
    <citation type="journal article" date="1999" name="Nature">
        <title>Genomic sequence comparison of two unrelated isolates of the human gastric pathogen Helicobacter pylori.</title>
        <authorList>
            <person name="Alm R.A."/>
            <person name="Ling L.-S.L."/>
            <person name="Moir D.T."/>
            <person name="King B.L."/>
            <person name="Brown E.D."/>
            <person name="Doig P.C."/>
            <person name="Smith D.R."/>
            <person name="Noonan B."/>
            <person name="Guild B.C."/>
            <person name="deJonge B.L."/>
            <person name="Carmel G."/>
            <person name="Tummino P.J."/>
            <person name="Caruso A."/>
            <person name="Uria-Nickelsen M."/>
            <person name="Mills D.M."/>
            <person name="Ives C."/>
            <person name="Gibson R."/>
            <person name="Merberg D."/>
            <person name="Mills S.D."/>
            <person name="Jiang Q."/>
            <person name="Taylor D.E."/>
            <person name="Vovis G.F."/>
            <person name="Trust T.J."/>
        </authorList>
    </citation>
    <scope>NUCLEOTIDE SEQUENCE [LARGE SCALE GENOMIC DNA]</scope>
    <source>
        <strain>J99 / ATCC 700824</strain>
    </source>
</reference>
<proteinExistence type="inferred from homology"/>
<organism>
    <name type="scientific">Helicobacter pylori (strain J99 / ATCC 700824)</name>
    <name type="common">Campylobacter pylori J99</name>
    <dbReference type="NCBI Taxonomy" id="85963"/>
    <lineage>
        <taxon>Bacteria</taxon>
        <taxon>Pseudomonadati</taxon>
        <taxon>Campylobacterota</taxon>
        <taxon>Epsilonproteobacteria</taxon>
        <taxon>Campylobacterales</taxon>
        <taxon>Helicobacteraceae</taxon>
        <taxon>Helicobacter</taxon>
    </lineage>
</organism>